<evidence type="ECO:0000250" key="1"/>
<evidence type="ECO:0000255" key="2">
    <source>
        <dbReference type="PROSITE-ProRule" id="PRU00362"/>
    </source>
</evidence>
<evidence type="ECO:0000255" key="3">
    <source>
        <dbReference type="PROSITE-ProRule" id="PRU00434"/>
    </source>
</evidence>
<evidence type="ECO:0000255" key="4">
    <source>
        <dbReference type="PROSITE-ProRule" id="PRU00441"/>
    </source>
</evidence>
<evidence type="ECO:0000305" key="5"/>
<name>LKB1A_MANHA</name>
<feature type="chain" id="PRO_0000092379" description="Leukotoxin translocation ATP-binding protein LktB">
    <location>
        <begin position="1"/>
        <end position="708"/>
    </location>
</feature>
<feature type="transmembrane region" description="Helical" evidence="4">
    <location>
        <begin position="159"/>
        <end position="179"/>
    </location>
</feature>
<feature type="transmembrane region" description="Helical" evidence="4">
    <location>
        <begin position="192"/>
        <end position="212"/>
    </location>
</feature>
<feature type="transmembrane region" description="Helical" evidence="4">
    <location>
        <begin position="270"/>
        <end position="290"/>
    </location>
</feature>
<feature type="transmembrane region" description="Helical" evidence="4">
    <location>
        <begin position="296"/>
        <end position="316"/>
    </location>
</feature>
<feature type="transmembrane region" description="Helical" evidence="4">
    <location>
        <begin position="389"/>
        <end position="409"/>
    </location>
</feature>
<feature type="domain" description="Peptidase C39" evidence="2">
    <location>
        <begin position="1"/>
        <end position="126"/>
    </location>
</feature>
<feature type="domain" description="ABC transmembrane type-1" evidence="4">
    <location>
        <begin position="155"/>
        <end position="437"/>
    </location>
</feature>
<feature type="domain" description="ABC transporter" evidence="2 3">
    <location>
        <begin position="469"/>
        <end position="704"/>
    </location>
</feature>
<feature type="binding site" evidence="2 3">
    <location>
        <begin position="503"/>
        <end position="510"/>
    </location>
    <ligand>
        <name>ATP</name>
        <dbReference type="ChEBI" id="CHEBI:30616"/>
    </ligand>
</feature>
<feature type="sequence variant" description="In strain: Serotype A1 / PH101.">
    <original>Q</original>
    <variation>T</variation>
    <location>
        <position position="112"/>
    </location>
</feature>
<feature type="sequence variant" description="In strain: Serotype A1 / PH101 and Serotype A1 / PH8.">
    <original>S</original>
    <variation>A</variation>
    <location>
        <position position="340"/>
    </location>
</feature>
<feature type="sequence variant" description="In strain: Serotype A1 /PH101.">
    <original>SS</original>
    <variation>FI</variation>
    <location>
        <begin position="366"/>
        <end position="367"/>
    </location>
</feature>
<feature type="sequence variant" description="In strain: Serotype A1 / PH8.">
    <original>V</original>
    <variation>I</variation>
    <location>
        <position position="576"/>
    </location>
</feature>
<feature type="sequence variant" description="In strain: Serotype A1 / PH101.">
    <original>N</original>
    <variation>T</variation>
    <location>
        <position position="597"/>
    </location>
</feature>
<organism>
    <name type="scientific">Mannheimia haemolytica</name>
    <name type="common">Pasteurella haemolytica</name>
    <dbReference type="NCBI Taxonomy" id="75985"/>
    <lineage>
        <taxon>Bacteria</taxon>
        <taxon>Pseudomonadati</taxon>
        <taxon>Pseudomonadota</taxon>
        <taxon>Gammaproteobacteria</taxon>
        <taxon>Pasteurellales</taxon>
        <taxon>Pasteurellaceae</taxon>
        <taxon>Mannheimia</taxon>
    </lineage>
</organism>
<dbReference type="EC" id="7.4.2.5"/>
<dbReference type="EMBL" id="M20730">
    <property type="protein sequence ID" value="AAA25530.1"/>
    <property type="molecule type" value="Genomic_DNA"/>
</dbReference>
<dbReference type="EMBL" id="M24197">
    <property type="protein sequence ID" value="AAA25544.1"/>
    <property type="molecule type" value="Genomic_DNA"/>
</dbReference>
<dbReference type="EMBL" id="AF314506">
    <property type="protein sequence ID" value="AAL12770.1"/>
    <property type="molecule type" value="Genomic_DNA"/>
</dbReference>
<dbReference type="PIR" id="C30169">
    <property type="entry name" value="C30169"/>
</dbReference>
<dbReference type="SMR" id="P16532"/>
<dbReference type="GO" id="GO:0005886">
    <property type="term" value="C:plasma membrane"/>
    <property type="evidence" value="ECO:0007669"/>
    <property type="project" value="UniProtKB-SubCell"/>
</dbReference>
<dbReference type="GO" id="GO:0030256">
    <property type="term" value="C:type I protein secretion system complex"/>
    <property type="evidence" value="ECO:0007669"/>
    <property type="project" value="InterPro"/>
</dbReference>
<dbReference type="GO" id="GO:0140359">
    <property type="term" value="F:ABC-type transporter activity"/>
    <property type="evidence" value="ECO:0007669"/>
    <property type="project" value="InterPro"/>
</dbReference>
<dbReference type="GO" id="GO:0005524">
    <property type="term" value="F:ATP binding"/>
    <property type="evidence" value="ECO:0007669"/>
    <property type="project" value="UniProtKB-KW"/>
</dbReference>
<dbReference type="GO" id="GO:0016887">
    <property type="term" value="F:ATP hydrolysis activity"/>
    <property type="evidence" value="ECO:0007669"/>
    <property type="project" value="InterPro"/>
</dbReference>
<dbReference type="GO" id="GO:0034040">
    <property type="term" value="F:ATPase-coupled lipid transmembrane transporter activity"/>
    <property type="evidence" value="ECO:0007669"/>
    <property type="project" value="TreeGrafter"/>
</dbReference>
<dbReference type="GO" id="GO:0030253">
    <property type="term" value="P:protein secretion by the type I secretion system"/>
    <property type="evidence" value="ECO:0007669"/>
    <property type="project" value="InterPro"/>
</dbReference>
<dbReference type="GO" id="GO:0006508">
    <property type="term" value="P:proteolysis"/>
    <property type="evidence" value="ECO:0007669"/>
    <property type="project" value="InterPro"/>
</dbReference>
<dbReference type="CDD" id="cd18588">
    <property type="entry name" value="ABC_6TM_CyaB_HlyB_like"/>
    <property type="match status" value="1"/>
</dbReference>
<dbReference type="CDD" id="cd03252">
    <property type="entry name" value="ABCC_Hemolysin"/>
    <property type="match status" value="1"/>
</dbReference>
<dbReference type="CDD" id="cd02417">
    <property type="entry name" value="Peptidase_C39_likeA"/>
    <property type="match status" value="1"/>
</dbReference>
<dbReference type="FunFam" id="3.40.50.300:FF:000299">
    <property type="entry name" value="ABC transporter ATP-binding protein/permease"/>
    <property type="match status" value="1"/>
</dbReference>
<dbReference type="FunFam" id="1.20.1560.10:FF:000056">
    <property type="entry name" value="Alpha-hemolysin translocation ATP-binding protein HlyB"/>
    <property type="match status" value="1"/>
</dbReference>
<dbReference type="Gene3D" id="1.20.1560.10">
    <property type="entry name" value="ABC transporter type 1, transmembrane domain"/>
    <property type="match status" value="1"/>
</dbReference>
<dbReference type="Gene3D" id="3.90.70.10">
    <property type="entry name" value="Cysteine proteinases"/>
    <property type="match status" value="1"/>
</dbReference>
<dbReference type="Gene3D" id="3.40.50.300">
    <property type="entry name" value="P-loop containing nucleotide triphosphate hydrolases"/>
    <property type="match status" value="1"/>
</dbReference>
<dbReference type="InterPro" id="IPR003593">
    <property type="entry name" value="AAA+_ATPase"/>
</dbReference>
<dbReference type="InterPro" id="IPR011527">
    <property type="entry name" value="ABC1_TM_dom"/>
</dbReference>
<dbReference type="InterPro" id="IPR036640">
    <property type="entry name" value="ABC1_TM_sf"/>
</dbReference>
<dbReference type="InterPro" id="IPR003439">
    <property type="entry name" value="ABC_transporter-like_ATP-bd"/>
</dbReference>
<dbReference type="InterPro" id="IPR017871">
    <property type="entry name" value="ABC_transporter-like_CS"/>
</dbReference>
<dbReference type="InterPro" id="IPR010132">
    <property type="entry name" value="ATPase_T1SS_HlyB"/>
</dbReference>
<dbReference type="InterPro" id="IPR027417">
    <property type="entry name" value="P-loop_NTPase"/>
</dbReference>
<dbReference type="InterPro" id="IPR005074">
    <property type="entry name" value="Peptidase_C39"/>
</dbReference>
<dbReference type="InterPro" id="IPR039395">
    <property type="entry name" value="Peptidase_C39-like_A"/>
</dbReference>
<dbReference type="InterPro" id="IPR039421">
    <property type="entry name" value="Type_1_exporter"/>
</dbReference>
<dbReference type="NCBIfam" id="TIGR01846">
    <property type="entry name" value="type_I_sec_HlyB"/>
    <property type="match status" value="1"/>
</dbReference>
<dbReference type="PANTHER" id="PTHR24221">
    <property type="entry name" value="ATP-BINDING CASSETTE SUB-FAMILY B"/>
    <property type="match status" value="1"/>
</dbReference>
<dbReference type="PANTHER" id="PTHR24221:SF647">
    <property type="entry name" value="BLL6336 PROTEIN"/>
    <property type="match status" value="1"/>
</dbReference>
<dbReference type="Pfam" id="PF00664">
    <property type="entry name" value="ABC_membrane"/>
    <property type="match status" value="1"/>
</dbReference>
<dbReference type="Pfam" id="PF00005">
    <property type="entry name" value="ABC_tran"/>
    <property type="match status" value="1"/>
</dbReference>
<dbReference type="Pfam" id="PF03412">
    <property type="entry name" value="Peptidase_C39"/>
    <property type="match status" value="1"/>
</dbReference>
<dbReference type="SMART" id="SM00382">
    <property type="entry name" value="AAA"/>
    <property type="match status" value="1"/>
</dbReference>
<dbReference type="SUPFAM" id="SSF90123">
    <property type="entry name" value="ABC transporter transmembrane region"/>
    <property type="match status" value="1"/>
</dbReference>
<dbReference type="SUPFAM" id="SSF52540">
    <property type="entry name" value="P-loop containing nucleoside triphosphate hydrolases"/>
    <property type="match status" value="1"/>
</dbReference>
<dbReference type="PROSITE" id="PS50929">
    <property type="entry name" value="ABC_TM1F"/>
    <property type="match status" value="1"/>
</dbReference>
<dbReference type="PROSITE" id="PS00211">
    <property type="entry name" value="ABC_TRANSPORTER_1"/>
    <property type="match status" value="1"/>
</dbReference>
<dbReference type="PROSITE" id="PS50893">
    <property type="entry name" value="ABC_TRANSPORTER_2"/>
    <property type="match status" value="1"/>
</dbReference>
<dbReference type="PROSITE" id="PS50990">
    <property type="entry name" value="PEPTIDASE_C39"/>
    <property type="match status" value="1"/>
</dbReference>
<protein>
    <recommendedName>
        <fullName>Leukotoxin translocation ATP-binding protein LktB</fullName>
        <ecNumber>7.4.2.5</ecNumber>
    </recommendedName>
</protein>
<comment type="function">
    <text evidence="5">Part of the ABC transporter complex LktBD involved in leukotoxin export. Transmembrane domains (TMD) form a pore in the inner membrane and the ATP-binding domain (NBD) is responsible for energy generation (Probable).</text>
</comment>
<comment type="catalytic activity">
    <reaction>
        <text>ATP + H2O + proteinSide 1 = ADP + phosphate + proteinSide 2.</text>
        <dbReference type="EC" id="7.4.2.5"/>
    </reaction>
</comment>
<comment type="subunit">
    <text evidence="1">Homodimer.</text>
</comment>
<comment type="subcellular location">
    <subcellularLocation>
        <location evidence="5">Cell inner membrane</location>
        <topology evidence="5">Multi-pass membrane protein</topology>
    </subcellularLocation>
</comment>
<comment type="domain">
    <text>In LktB the peptidase C39 domain, the ATP-binding domain (NBD) and the transmembrane domain (TMD) are fused.</text>
</comment>
<comment type="similarity">
    <text evidence="5">Belongs to the ABC transporter superfamily. Protein-1 exporter (TC 3.A.1.109) family.</text>
</comment>
<comment type="caution">
    <text evidence="5">Leu-10 is present instead of the conserved Cys which is expected to be the active site residue of peptidase C39. Thus this protein is presumed to be without peptidase activity.</text>
</comment>
<accession>P16532</accession>
<accession>Q93FH5</accession>
<reference key="1">
    <citation type="journal article" date="1989" name="J. Bacteriol.">
        <title>Cloning, nucleotide sequence, and characterization of genes encoding the secretion function of the Pasteurella haemolytica leukotoxin determinant.</title>
        <authorList>
            <person name="Strathdee C.A."/>
            <person name="Lo R.Y.C."/>
        </authorList>
    </citation>
    <scope>NUCLEOTIDE SEQUENCE [GENOMIC DNA]</scope>
    <source>
        <strain>Serotype A1</strain>
    </source>
</reference>
<reference key="2">
    <citation type="journal article" date="1989" name="DNA">
        <title>DNA sequence of the Pasteurella haemolytica leukotoxin gene cluster.</title>
        <authorList>
            <person name="Highlander S.K."/>
            <person name="Chidambaram M."/>
            <person name="Engler M.J."/>
            <person name="Weinstock G.M."/>
        </authorList>
    </citation>
    <scope>NUCLEOTIDE SEQUENCE [GENOMIC DNA]</scope>
    <source>
        <strain>Serotype A1 / PH101</strain>
    </source>
</reference>
<reference key="3">
    <citation type="journal article" date="2002" name="J. Bacteriol.">
        <title>Mosaic structure and molecular evolution of the leukotoxin operon (lktCABD) in Mannheimia (Pasteurella) haemolytica, Mannheimia glucosida, and Pasteurella trehalosi.</title>
        <authorList>
            <person name="Davies R.L."/>
            <person name="Campbell S."/>
            <person name="Whittam T.S."/>
        </authorList>
    </citation>
    <scope>NUCLEOTIDE SEQUENCE [GENOMIC DNA]</scope>
    <source>
        <strain>Serotype A1 / PH8</strain>
    </source>
</reference>
<reference key="4">
    <citation type="journal article" date="1990" name="J. Bacteriol.">
        <title>Secretion and expression of the Pasteurella haemolytica Leukotoxin.</title>
        <authorList>
            <person name="Highlander S.K."/>
            <person name="Engler M.J."/>
            <person name="Weinstock G.M."/>
        </authorList>
    </citation>
    <scope>NUCLEOTIDE SEQUENCE [GENOMIC DNA] OF 1-48</scope>
    <source>
        <strain>Serotype A1</strain>
    </source>
</reference>
<sequence length="708" mass="79713">MEANHQRNDLGLVALTMLAQYHNISLNPEEIKHKFDLDGKGLSLTAWLLAAKSLALKAKHIKKEISRLHLVNLPALVWQDNGKHFLLVKVDTDNNRYLTYNLEQDAPQILSQDEFEACYQGQLILVTSRASVVGQLAKFDFTWFIPAVIKYRKIFLETLIVSIFLQIFALITPLFFQVVMDKVLVHRGFSTLNIITVALAIVIIFEIVLSGLRTYVFSHSTSRIDVELGAKLFRHLLSLPISYFENRRVGDTVARVRELDQIRNFLTGQALTSVLDLLFSFIFFAVMWYYSPKLTLVILGSLPCYILWSIFISPILRRRLDEKFARSADNQAFLVESVTSINMIKAMAVAPQMTDTWDKQLASYVSSSFRVTVLATIGQQGVQLIQKTVMVINLWLGAHLVISGDLSIGQLIAFNMLSGQVIAPVIRLAQLWQDFQQVGISVTRLGDVLNSPTEQYQGKLSLPEIKGDISFKNIRFRYKPDAPTILNNVNLEIRQGEVIGIVGRSGSGKSTLTKLLQRFYIPENGQVLIDGHDLALADPNWLRRQIGVVLQDNVLLNRSIRENIALSDPGMPMERVIYAAKLAGAHDFISELREGYNTIVGEQGAGLSGGQRQRIAIARALVNNPKILIFDEATSALDYESEHIIMQNMQKICQGRTVILIAHRLSTVKNADRIIVMEKGEIVEQGKHHELLQNSNGLYSYLHQLQLN</sequence>
<proteinExistence type="inferred from homology"/>
<keyword id="KW-0067">ATP-binding</keyword>
<keyword id="KW-0997">Cell inner membrane</keyword>
<keyword id="KW-1003">Cell membrane</keyword>
<keyword id="KW-0472">Membrane</keyword>
<keyword id="KW-0547">Nucleotide-binding</keyword>
<keyword id="KW-1278">Translocase</keyword>
<keyword id="KW-0812">Transmembrane</keyword>
<keyword id="KW-1133">Transmembrane helix</keyword>
<keyword id="KW-0813">Transport</keyword>
<gene>
    <name type="primary">lktB</name>
</gene>